<comment type="function">
    <text evidence="1">The pyruvate dehydrogenase complex catalyzes the overall conversion of pyruvate to acetyl-CoA and CO(2). It contains multiple copies of three enzymatic components: pyruvate dehydrogenase (E1), dihydrolipoamide acetyltransferase (E2) and lipoamide dehydrogenase (E3) (By similarity).</text>
</comment>
<comment type="catalytic activity">
    <reaction>
        <text>N(6)-[(R)-lipoyl]-L-lysyl-[protein] + pyruvate + H(+) = N(6)-[(R)-S(8)-acetyldihydrolipoyl]-L-lysyl-[protein] + CO2</text>
        <dbReference type="Rhea" id="RHEA:19189"/>
        <dbReference type="Rhea" id="RHEA-COMP:10474"/>
        <dbReference type="Rhea" id="RHEA-COMP:10478"/>
        <dbReference type="ChEBI" id="CHEBI:15361"/>
        <dbReference type="ChEBI" id="CHEBI:15378"/>
        <dbReference type="ChEBI" id="CHEBI:16526"/>
        <dbReference type="ChEBI" id="CHEBI:83099"/>
        <dbReference type="ChEBI" id="CHEBI:83111"/>
        <dbReference type="EC" id="1.2.4.1"/>
    </reaction>
</comment>
<comment type="cofactor">
    <cofactor evidence="1">
        <name>thiamine diphosphate</name>
        <dbReference type="ChEBI" id="CHEBI:58937"/>
    </cofactor>
</comment>
<comment type="subunit">
    <text>Heterodimer of an alpha and a beta chain.</text>
</comment>
<dbReference type="EC" id="1.2.4.1"/>
<dbReference type="EMBL" id="AF190792">
    <property type="protein sequence ID" value="AAF04587.1"/>
    <property type="molecule type" value="Genomic_DNA"/>
</dbReference>
<dbReference type="EMBL" id="AL591688">
    <property type="protein sequence ID" value="CAC46024.1"/>
    <property type="molecule type" value="Genomic_DNA"/>
</dbReference>
<dbReference type="RefSeq" id="NP_385551.1">
    <property type="nucleotide sequence ID" value="NC_003047.1"/>
</dbReference>
<dbReference type="RefSeq" id="WP_003535472.1">
    <property type="nucleotide sequence ID" value="NC_003047.1"/>
</dbReference>
<dbReference type="SMR" id="Q9R9N5"/>
<dbReference type="EnsemblBacteria" id="CAC46024">
    <property type="protein sequence ID" value="CAC46024"/>
    <property type="gene ID" value="SMc01030"/>
</dbReference>
<dbReference type="GeneID" id="89575770"/>
<dbReference type="KEGG" id="sme:SMc01030"/>
<dbReference type="PATRIC" id="fig|266834.11.peg.2865"/>
<dbReference type="eggNOG" id="COG1071">
    <property type="taxonomic scope" value="Bacteria"/>
</dbReference>
<dbReference type="HOGENOM" id="CLU_029393_5_2_5"/>
<dbReference type="OrthoDB" id="9766715at2"/>
<dbReference type="Proteomes" id="UP000001976">
    <property type="component" value="Chromosome"/>
</dbReference>
<dbReference type="GO" id="GO:0043231">
    <property type="term" value="C:intracellular membrane-bounded organelle"/>
    <property type="evidence" value="ECO:0007669"/>
    <property type="project" value="InterPro"/>
</dbReference>
<dbReference type="GO" id="GO:0004739">
    <property type="term" value="F:pyruvate dehydrogenase (acetyl-transferring) activity"/>
    <property type="evidence" value="ECO:0007669"/>
    <property type="project" value="UniProtKB-EC"/>
</dbReference>
<dbReference type="GO" id="GO:0006086">
    <property type="term" value="P:pyruvate decarboxylation to acetyl-CoA"/>
    <property type="evidence" value="ECO:0007669"/>
    <property type="project" value="InterPro"/>
</dbReference>
<dbReference type="CDD" id="cd02000">
    <property type="entry name" value="TPP_E1_PDC_ADC_BCADC"/>
    <property type="match status" value="1"/>
</dbReference>
<dbReference type="FunFam" id="3.40.50.970:FF:000013">
    <property type="entry name" value="Pyruvate dehydrogenase E1 component subunit alpha"/>
    <property type="match status" value="1"/>
</dbReference>
<dbReference type="Gene3D" id="3.40.50.970">
    <property type="match status" value="1"/>
</dbReference>
<dbReference type="InterPro" id="IPR001017">
    <property type="entry name" value="DH_E1"/>
</dbReference>
<dbReference type="InterPro" id="IPR050642">
    <property type="entry name" value="PDH_E1_Alpha_Subunit"/>
</dbReference>
<dbReference type="InterPro" id="IPR017597">
    <property type="entry name" value="Pyrv_DH_E1_asu_subgrp-y"/>
</dbReference>
<dbReference type="InterPro" id="IPR029061">
    <property type="entry name" value="THDP-binding"/>
</dbReference>
<dbReference type="NCBIfam" id="TIGR03182">
    <property type="entry name" value="PDH_E1_alph_y"/>
    <property type="match status" value="1"/>
</dbReference>
<dbReference type="PANTHER" id="PTHR11516:SF60">
    <property type="entry name" value="PYRUVATE DEHYDROGENASE E1 COMPONENT SUBUNIT ALPHA"/>
    <property type="match status" value="1"/>
</dbReference>
<dbReference type="PANTHER" id="PTHR11516">
    <property type="entry name" value="PYRUVATE DEHYDROGENASE E1 COMPONENT, ALPHA SUBUNIT BACTERIAL AND ORGANELLAR"/>
    <property type="match status" value="1"/>
</dbReference>
<dbReference type="Pfam" id="PF00676">
    <property type="entry name" value="E1_dh"/>
    <property type="match status" value="1"/>
</dbReference>
<dbReference type="SUPFAM" id="SSF52518">
    <property type="entry name" value="Thiamin diphosphate-binding fold (THDP-binding)"/>
    <property type="match status" value="1"/>
</dbReference>
<evidence type="ECO:0000250" key="1"/>
<evidence type="ECO:0000256" key="2">
    <source>
        <dbReference type="SAM" id="MobiDB-lite"/>
    </source>
</evidence>
<protein>
    <recommendedName>
        <fullName>Pyruvate dehydrogenase E1 component subunit alpha</fullName>
        <ecNumber>1.2.4.1</ecNumber>
    </recommendedName>
</protein>
<organism>
    <name type="scientific">Rhizobium meliloti (strain 1021)</name>
    <name type="common">Ensifer meliloti</name>
    <name type="synonym">Sinorhizobium meliloti</name>
    <dbReference type="NCBI Taxonomy" id="266834"/>
    <lineage>
        <taxon>Bacteria</taxon>
        <taxon>Pseudomonadati</taxon>
        <taxon>Pseudomonadota</taxon>
        <taxon>Alphaproteobacteria</taxon>
        <taxon>Hyphomicrobiales</taxon>
        <taxon>Rhizobiaceae</taxon>
        <taxon>Sinorhizobium/Ensifer group</taxon>
        <taxon>Sinorhizobium</taxon>
    </lineage>
</organism>
<feature type="chain" id="PRO_0000162202" description="Pyruvate dehydrogenase E1 component subunit alpha">
    <location>
        <begin position="1"/>
        <end position="348"/>
    </location>
</feature>
<feature type="region of interest" description="Disordered" evidence="2">
    <location>
        <begin position="1"/>
        <end position="21"/>
    </location>
</feature>
<sequence length="348" mass="38113">MAPRKSASVSSRKTAAKPAKKDFAGGTIAEFSKEDDLKAYREMLLIRRFEEKAGQLYGMGFIGGFCHLYIGQEAVVVGMQLALKEGDQVITGYRDHGHMLACGMSARGVMAELTGRRGGLSKGKGGSMHMFSKEKHFYGGHGIVGAQVSLGTGLAFANRYRGNDNVSLAYFGDGAANQGQVYESFNMAALWKLPVIYIVENNRYAMGTSVSRASAQTDFSQRGASFGIPGYQVDGMDVRAVKAAADEAVEHCRSGKGPIILEMLTYRYRGHSMSDPAKYRSKDEVQKMRSEHDPIEQVKARLTDKGWATEDELKQIDKEVRDIVADSADFAQSDPEPDVSELYTDILL</sequence>
<reference key="1">
    <citation type="journal article" date="2000" name="Mol. Plant Microbe Interact.">
        <title>Symbiotic induction of pyruvate dehydrogenase genes from Sinorhizobium meliloti.</title>
        <authorList>
            <person name="Cabanes D."/>
            <person name="Boistard P."/>
            <person name="Batut J."/>
        </authorList>
    </citation>
    <scope>NUCLEOTIDE SEQUENCE [GENOMIC DNA]</scope>
    <source>
        <strain>RCR2011 / SU47</strain>
    </source>
</reference>
<reference key="2">
    <citation type="journal article" date="2001" name="Proc. Natl. Acad. Sci. U.S.A.">
        <title>Analysis of the chromosome sequence of the legume symbiont Sinorhizobium meliloti strain 1021.</title>
        <authorList>
            <person name="Capela D."/>
            <person name="Barloy-Hubler F."/>
            <person name="Gouzy J."/>
            <person name="Bothe G."/>
            <person name="Ampe F."/>
            <person name="Batut J."/>
            <person name="Boistard P."/>
            <person name="Becker A."/>
            <person name="Boutry M."/>
            <person name="Cadieu E."/>
            <person name="Dreano S."/>
            <person name="Gloux S."/>
            <person name="Godrie T."/>
            <person name="Goffeau A."/>
            <person name="Kahn D."/>
            <person name="Kiss E."/>
            <person name="Lelaure V."/>
            <person name="Masuy D."/>
            <person name="Pohl T."/>
            <person name="Portetelle D."/>
            <person name="Puehler A."/>
            <person name="Purnelle B."/>
            <person name="Ramsperger U."/>
            <person name="Renard C."/>
            <person name="Thebault P."/>
            <person name="Vandenbol M."/>
            <person name="Weidner S."/>
            <person name="Galibert F."/>
        </authorList>
    </citation>
    <scope>NUCLEOTIDE SEQUENCE [LARGE SCALE GENOMIC DNA]</scope>
    <source>
        <strain>1021</strain>
    </source>
</reference>
<reference key="3">
    <citation type="journal article" date="2001" name="Science">
        <title>The composite genome of the legume symbiont Sinorhizobium meliloti.</title>
        <authorList>
            <person name="Galibert F."/>
            <person name="Finan T.M."/>
            <person name="Long S.R."/>
            <person name="Puehler A."/>
            <person name="Abola P."/>
            <person name="Ampe F."/>
            <person name="Barloy-Hubler F."/>
            <person name="Barnett M.J."/>
            <person name="Becker A."/>
            <person name="Boistard P."/>
            <person name="Bothe G."/>
            <person name="Boutry M."/>
            <person name="Bowser L."/>
            <person name="Buhrmester J."/>
            <person name="Cadieu E."/>
            <person name="Capela D."/>
            <person name="Chain P."/>
            <person name="Cowie A."/>
            <person name="Davis R.W."/>
            <person name="Dreano S."/>
            <person name="Federspiel N.A."/>
            <person name="Fisher R.F."/>
            <person name="Gloux S."/>
            <person name="Godrie T."/>
            <person name="Goffeau A."/>
            <person name="Golding B."/>
            <person name="Gouzy J."/>
            <person name="Gurjal M."/>
            <person name="Hernandez-Lucas I."/>
            <person name="Hong A."/>
            <person name="Huizar L."/>
            <person name="Hyman R.W."/>
            <person name="Jones T."/>
            <person name="Kahn D."/>
            <person name="Kahn M.L."/>
            <person name="Kalman S."/>
            <person name="Keating D.H."/>
            <person name="Kiss E."/>
            <person name="Komp C."/>
            <person name="Lelaure V."/>
            <person name="Masuy D."/>
            <person name="Palm C."/>
            <person name="Peck M.C."/>
            <person name="Pohl T.M."/>
            <person name="Portetelle D."/>
            <person name="Purnelle B."/>
            <person name="Ramsperger U."/>
            <person name="Surzycki R."/>
            <person name="Thebault P."/>
            <person name="Vandenbol M."/>
            <person name="Vorhoelter F.J."/>
            <person name="Weidner S."/>
            <person name="Wells D.H."/>
            <person name="Wong K."/>
            <person name="Yeh K.-C."/>
            <person name="Batut J."/>
        </authorList>
    </citation>
    <scope>NUCLEOTIDE SEQUENCE [LARGE SCALE GENOMIC DNA]</scope>
    <source>
        <strain>1021</strain>
    </source>
</reference>
<proteinExistence type="inferred from homology"/>
<gene>
    <name type="primary">pdhA</name>
    <name type="synonym">pdhAalpha</name>
    <name type="ordered locus">R01445</name>
    <name type="ORF">SMc01030</name>
</gene>
<keyword id="KW-0560">Oxidoreductase</keyword>
<keyword id="KW-0670">Pyruvate</keyword>
<keyword id="KW-1185">Reference proteome</keyword>
<keyword id="KW-0786">Thiamine pyrophosphate</keyword>
<accession>Q9R9N5</accession>
<name>ODPA_RHIME</name>